<organism>
    <name type="scientific">Rattus norvegicus</name>
    <name type="common">Rat</name>
    <dbReference type="NCBI Taxonomy" id="10116"/>
    <lineage>
        <taxon>Eukaryota</taxon>
        <taxon>Metazoa</taxon>
        <taxon>Chordata</taxon>
        <taxon>Craniata</taxon>
        <taxon>Vertebrata</taxon>
        <taxon>Euteleostomi</taxon>
        <taxon>Mammalia</taxon>
        <taxon>Eutheria</taxon>
        <taxon>Euarchontoglires</taxon>
        <taxon>Glires</taxon>
        <taxon>Rodentia</taxon>
        <taxon>Myomorpha</taxon>
        <taxon>Muroidea</taxon>
        <taxon>Muridae</taxon>
        <taxon>Murinae</taxon>
        <taxon>Rattus</taxon>
    </lineage>
</organism>
<protein>
    <recommendedName>
        <fullName>Cyclin-L2</fullName>
    </recommendedName>
</protein>
<sequence>MAAAAAGASGLMAPALAACSSGSGGAAPGSQGVLIGDRLYSGVLITLENCLLPDDKLRFTPSMSSGLDIDTETGLRVVGCELIQAAGILLRLPQVAMATGQVLFQRFFYTKSFVKHSMEHVSMACVHLASKIEEAPRRIRDVINVFHRLRHLREKKKPVPLVLDQEYVNLKNQIIKAERRVLKELGFCVHVKHPHKIIVMYLQVLECERNQHLVQTAWNYMNDSLRTDVFVRFQPESIACACIYLAARTLEIPLPNRPHWFLLFGATEEEIQEICFKILQLYTRKKVDLTHLESEVEKRKHAIEEAKARAKGLLPPGSAPGLDSATAGFSPAPKPESPKEGKGSKSSPLSVKNAKRKMEGPKKAKGDSPVNGLLKGQESRSQSRSREQSYSRSPSRSASPKRRKSDSGSTSGGSKSQSRSRSRSDSPPRQVHRGAPYKGSEVRGSRKSKDCKHLTQKPHKSRSRSSSRSRSRSRERTDSSGKYKKKSHYYRDQRRERSRSYERTGHRYERDHPGHSRHRR</sequence>
<gene>
    <name type="primary">Ccnl2</name>
</gene>
<comment type="function">
    <text evidence="2">Involved in pre-mRNA splicing. May induce cell death, possibly by acting on the transcription and RNA processing of apoptosis-related factors.</text>
</comment>
<comment type="subunit">
    <text evidence="2 3">Interacts with CDK11A, CDK11B, CDK12, CDK13 and POLR2A, the hyperphosphorylated C-terminal domain (CTD) of RNA polymerase II. May form a ternary complex with CDK11B and casein kinase II (CKII). Interacts with pre-mRNA-splicing factors, including at least SRSF1, SRSF2 and SRSF7/SLU7.</text>
</comment>
<comment type="subcellular location">
    <subcellularLocation>
        <location evidence="2">Nucleus speckle</location>
    </subcellularLocation>
    <subcellularLocation>
        <location evidence="2">Nucleus</location>
        <location evidence="2">Nucleoplasm</location>
    </subcellularLocation>
</comment>
<comment type="alternative products">
    <event type="alternative splicing"/>
    <isoform>
        <id>Q5I0H5-1</id>
        <name>1</name>
        <sequence type="displayed"/>
    </isoform>
    <isoform>
        <id>Q5I0H5-2</id>
        <name>2</name>
        <sequence type="described" ref="VSP_016136 VSP_016137"/>
    </isoform>
</comment>
<comment type="domain">
    <text evidence="1">Contains a RS region (arginine-serine dipeptide repeat) within the C-terminal domain which is the hallmark of the SR family of splicing factors. This region probably plays a role in protein-protein interactions (By similarity).</text>
</comment>
<comment type="similarity">
    <text evidence="6">Belongs to the cyclin family. Cyclin L subfamily.</text>
</comment>
<proteinExistence type="evidence at protein level"/>
<dbReference type="EMBL" id="AABR03040241">
    <property type="status" value="NOT_ANNOTATED_CDS"/>
    <property type="molecule type" value="Genomic_DNA"/>
</dbReference>
<dbReference type="EMBL" id="BC088316">
    <property type="protein sequence ID" value="AAH88316.1"/>
    <property type="molecule type" value="mRNA"/>
</dbReference>
<dbReference type="RefSeq" id="NP_001013112.1">
    <property type="nucleotide sequence ID" value="NM_001013094.1"/>
</dbReference>
<dbReference type="RefSeq" id="NP_001388234.1">
    <molecule id="Q5I0H5-1"/>
    <property type="nucleotide sequence ID" value="NM_001401305.2"/>
</dbReference>
<dbReference type="RefSeq" id="NP_001388236.1">
    <molecule id="Q5I0H5-2"/>
    <property type="nucleotide sequence ID" value="NM_001401307.2"/>
</dbReference>
<dbReference type="RefSeq" id="XP_006239607.1">
    <property type="nucleotide sequence ID" value="XM_006239545.3"/>
</dbReference>
<dbReference type="SMR" id="Q5I0H5"/>
<dbReference type="FunCoup" id="Q5I0H5">
    <property type="interactions" value="4261"/>
</dbReference>
<dbReference type="STRING" id="10116.ENSRNOP00000025531"/>
<dbReference type="iPTMnet" id="Q5I0H5"/>
<dbReference type="PhosphoSitePlus" id="Q5I0H5"/>
<dbReference type="PaxDb" id="10116-ENSRNOP00000025531"/>
<dbReference type="GeneID" id="298686"/>
<dbReference type="AGR" id="RGD:1309149"/>
<dbReference type="RGD" id="1309149">
    <property type="gene designation" value="Ccnl2"/>
</dbReference>
<dbReference type="VEuPathDB" id="HostDB:ENSRNOG00000018691"/>
<dbReference type="eggNOG" id="KOG0835">
    <property type="taxonomic scope" value="Eukaryota"/>
</dbReference>
<dbReference type="HOGENOM" id="CLU_022000_6_1_1"/>
<dbReference type="InParanoid" id="Q5I0H5"/>
<dbReference type="PhylomeDB" id="Q5I0H5"/>
<dbReference type="TreeFam" id="TF101011"/>
<dbReference type="PRO" id="PR:Q5I0H5"/>
<dbReference type="Proteomes" id="UP000002494">
    <property type="component" value="Chromosome 5"/>
</dbReference>
<dbReference type="Bgee" id="ENSRNOG00000018691">
    <property type="expression patterns" value="Expressed in ovary and 20 other cell types or tissues"/>
</dbReference>
<dbReference type="ExpressionAtlas" id="Q5I0H5">
    <property type="expression patterns" value="baseline and differential"/>
</dbReference>
<dbReference type="GO" id="GO:0000307">
    <property type="term" value="C:cyclin-dependent protein kinase holoenzyme complex"/>
    <property type="evidence" value="ECO:0000266"/>
    <property type="project" value="RGD"/>
</dbReference>
<dbReference type="GO" id="GO:0016607">
    <property type="term" value="C:nuclear speck"/>
    <property type="evidence" value="ECO:0007669"/>
    <property type="project" value="UniProtKB-SubCell"/>
</dbReference>
<dbReference type="GO" id="GO:0005634">
    <property type="term" value="C:nucleus"/>
    <property type="evidence" value="ECO:0000266"/>
    <property type="project" value="RGD"/>
</dbReference>
<dbReference type="GO" id="GO:0016538">
    <property type="term" value="F:cyclin-dependent protein serine/threonine kinase regulator activity"/>
    <property type="evidence" value="ECO:0000318"/>
    <property type="project" value="GO_Central"/>
</dbReference>
<dbReference type="GO" id="GO:0043484">
    <property type="term" value="P:regulation of RNA splicing"/>
    <property type="evidence" value="ECO:0000266"/>
    <property type="project" value="RGD"/>
</dbReference>
<dbReference type="GO" id="GO:0006357">
    <property type="term" value="P:regulation of transcription by RNA polymerase II"/>
    <property type="evidence" value="ECO:0007669"/>
    <property type="project" value="InterPro"/>
</dbReference>
<dbReference type="CDD" id="cd20590">
    <property type="entry name" value="CYCLIN_CCNL2_rpt1"/>
    <property type="match status" value="1"/>
</dbReference>
<dbReference type="CDD" id="cd20593">
    <property type="entry name" value="CYCLIN_CCNL2_rpt2"/>
    <property type="match status" value="1"/>
</dbReference>
<dbReference type="FunFam" id="1.10.472.10:FF:000014">
    <property type="entry name" value="cyclin-L1 isoform X1"/>
    <property type="match status" value="1"/>
</dbReference>
<dbReference type="FunFam" id="1.10.472.10:FF:000016">
    <property type="entry name" value="cyclin-L1 isoform X1"/>
    <property type="match status" value="1"/>
</dbReference>
<dbReference type="Gene3D" id="1.10.472.10">
    <property type="entry name" value="Cyclin-like"/>
    <property type="match status" value="2"/>
</dbReference>
<dbReference type="InterPro" id="IPR013763">
    <property type="entry name" value="Cyclin-like_dom"/>
</dbReference>
<dbReference type="InterPro" id="IPR036915">
    <property type="entry name" value="Cyclin-like_sf"/>
</dbReference>
<dbReference type="InterPro" id="IPR043198">
    <property type="entry name" value="Cyclin/Ssn8"/>
</dbReference>
<dbReference type="InterPro" id="IPR004367">
    <property type="entry name" value="Cyclin_C-dom"/>
</dbReference>
<dbReference type="InterPro" id="IPR006671">
    <property type="entry name" value="Cyclin_N"/>
</dbReference>
<dbReference type="PANTHER" id="PTHR10026">
    <property type="entry name" value="CYCLIN"/>
    <property type="match status" value="1"/>
</dbReference>
<dbReference type="Pfam" id="PF02984">
    <property type="entry name" value="Cyclin_C"/>
    <property type="match status" value="1"/>
</dbReference>
<dbReference type="Pfam" id="PF00134">
    <property type="entry name" value="Cyclin_N"/>
    <property type="match status" value="1"/>
</dbReference>
<dbReference type="PIRSF" id="PIRSF036580">
    <property type="entry name" value="Cyclin_L"/>
    <property type="match status" value="1"/>
</dbReference>
<dbReference type="SMART" id="SM00385">
    <property type="entry name" value="CYCLIN"/>
    <property type="match status" value="2"/>
</dbReference>
<dbReference type="SMART" id="SM01332">
    <property type="entry name" value="Cyclin_C"/>
    <property type="match status" value="1"/>
</dbReference>
<dbReference type="SUPFAM" id="SSF47954">
    <property type="entry name" value="Cyclin-like"/>
    <property type="match status" value="2"/>
</dbReference>
<evidence type="ECO:0000250" key="1"/>
<evidence type="ECO:0000250" key="2">
    <source>
        <dbReference type="UniProtKB" id="Q96S94"/>
    </source>
</evidence>
<evidence type="ECO:0000250" key="3">
    <source>
        <dbReference type="UniProtKB" id="Q9JJA7"/>
    </source>
</evidence>
<evidence type="ECO:0000256" key="4">
    <source>
        <dbReference type="SAM" id="MobiDB-lite"/>
    </source>
</evidence>
<evidence type="ECO:0000303" key="5">
    <source>
    </source>
</evidence>
<evidence type="ECO:0000305" key="6"/>
<evidence type="ECO:0007744" key="7">
    <source>
    </source>
</evidence>
<name>CCNL2_RAT</name>
<accession>Q5I0H5</accession>
<reference key="1">
    <citation type="journal article" date="2004" name="Nature">
        <title>Genome sequence of the Brown Norway rat yields insights into mammalian evolution.</title>
        <authorList>
            <person name="Gibbs R.A."/>
            <person name="Weinstock G.M."/>
            <person name="Metzker M.L."/>
            <person name="Muzny D.M."/>
            <person name="Sodergren E.J."/>
            <person name="Scherer S."/>
            <person name="Scott G."/>
            <person name="Steffen D."/>
            <person name="Worley K.C."/>
            <person name="Burch P.E."/>
            <person name="Okwuonu G."/>
            <person name="Hines S."/>
            <person name="Lewis L."/>
            <person name="Deramo C."/>
            <person name="Delgado O."/>
            <person name="Dugan-Rocha S."/>
            <person name="Miner G."/>
            <person name="Morgan M."/>
            <person name="Hawes A."/>
            <person name="Gill R."/>
            <person name="Holt R.A."/>
            <person name="Adams M.D."/>
            <person name="Amanatides P.G."/>
            <person name="Baden-Tillson H."/>
            <person name="Barnstead M."/>
            <person name="Chin S."/>
            <person name="Evans C.A."/>
            <person name="Ferriera S."/>
            <person name="Fosler C."/>
            <person name="Glodek A."/>
            <person name="Gu Z."/>
            <person name="Jennings D."/>
            <person name="Kraft C.L."/>
            <person name="Nguyen T."/>
            <person name="Pfannkoch C.M."/>
            <person name="Sitter C."/>
            <person name="Sutton G.G."/>
            <person name="Venter J.C."/>
            <person name="Woodage T."/>
            <person name="Smith D."/>
            <person name="Lee H.-M."/>
            <person name="Gustafson E."/>
            <person name="Cahill P."/>
            <person name="Kana A."/>
            <person name="Doucette-Stamm L."/>
            <person name="Weinstock K."/>
            <person name="Fechtel K."/>
            <person name="Weiss R.B."/>
            <person name="Dunn D.M."/>
            <person name="Green E.D."/>
            <person name="Blakesley R.W."/>
            <person name="Bouffard G.G."/>
            <person name="De Jong P.J."/>
            <person name="Osoegawa K."/>
            <person name="Zhu B."/>
            <person name="Marra M."/>
            <person name="Schein J."/>
            <person name="Bosdet I."/>
            <person name="Fjell C."/>
            <person name="Jones S."/>
            <person name="Krzywinski M."/>
            <person name="Mathewson C."/>
            <person name="Siddiqui A."/>
            <person name="Wye N."/>
            <person name="McPherson J."/>
            <person name="Zhao S."/>
            <person name="Fraser C.M."/>
            <person name="Shetty J."/>
            <person name="Shatsman S."/>
            <person name="Geer K."/>
            <person name="Chen Y."/>
            <person name="Abramzon S."/>
            <person name="Nierman W.C."/>
            <person name="Havlak P.H."/>
            <person name="Chen R."/>
            <person name="Durbin K.J."/>
            <person name="Egan A."/>
            <person name="Ren Y."/>
            <person name="Song X.-Z."/>
            <person name="Li B."/>
            <person name="Liu Y."/>
            <person name="Qin X."/>
            <person name="Cawley S."/>
            <person name="Cooney A.J."/>
            <person name="D'Souza L.M."/>
            <person name="Martin K."/>
            <person name="Wu J.Q."/>
            <person name="Gonzalez-Garay M.L."/>
            <person name="Jackson A.R."/>
            <person name="Kalafus K.J."/>
            <person name="McLeod M.P."/>
            <person name="Milosavljevic A."/>
            <person name="Virk D."/>
            <person name="Volkov A."/>
            <person name="Wheeler D.A."/>
            <person name="Zhang Z."/>
            <person name="Bailey J.A."/>
            <person name="Eichler E.E."/>
            <person name="Tuzun E."/>
            <person name="Birney E."/>
            <person name="Mongin E."/>
            <person name="Ureta-Vidal A."/>
            <person name="Woodwark C."/>
            <person name="Zdobnov E."/>
            <person name="Bork P."/>
            <person name="Suyama M."/>
            <person name="Torrents D."/>
            <person name="Alexandersson M."/>
            <person name="Trask B.J."/>
            <person name="Young J.M."/>
            <person name="Huang H."/>
            <person name="Wang H."/>
            <person name="Xing H."/>
            <person name="Daniels S."/>
            <person name="Gietzen D."/>
            <person name="Schmidt J."/>
            <person name="Stevens K."/>
            <person name="Vitt U."/>
            <person name="Wingrove J."/>
            <person name="Camara F."/>
            <person name="Mar Alba M."/>
            <person name="Abril J.F."/>
            <person name="Guigo R."/>
            <person name="Smit A."/>
            <person name="Dubchak I."/>
            <person name="Rubin E.M."/>
            <person name="Couronne O."/>
            <person name="Poliakov A."/>
            <person name="Huebner N."/>
            <person name="Ganten D."/>
            <person name="Goesele C."/>
            <person name="Hummel O."/>
            <person name="Kreitler T."/>
            <person name="Lee Y.-A."/>
            <person name="Monti J."/>
            <person name="Schulz H."/>
            <person name="Zimdahl H."/>
            <person name="Himmelbauer H."/>
            <person name="Lehrach H."/>
            <person name="Jacob H.J."/>
            <person name="Bromberg S."/>
            <person name="Gullings-Handley J."/>
            <person name="Jensen-Seaman M.I."/>
            <person name="Kwitek A.E."/>
            <person name="Lazar J."/>
            <person name="Pasko D."/>
            <person name="Tonellato P.J."/>
            <person name="Twigger S."/>
            <person name="Ponting C.P."/>
            <person name="Duarte J.M."/>
            <person name="Rice S."/>
            <person name="Goodstadt L."/>
            <person name="Beatson S.A."/>
            <person name="Emes R.D."/>
            <person name="Winter E.E."/>
            <person name="Webber C."/>
            <person name="Brandt P."/>
            <person name="Nyakatura G."/>
            <person name="Adetobi M."/>
            <person name="Chiaromonte F."/>
            <person name="Elnitski L."/>
            <person name="Eswara P."/>
            <person name="Hardison R.C."/>
            <person name="Hou M."/>
            <person name="Kolbe D."/>
            <person name="Makova K."/>
            <person name="Miller W."/>
            <person name="Nekrutenko A."/>
            <person name="Riemer C."/>
            <person name="Schwartz S."/>
            <person name="Taylor J."/>
            <person name="Yang S."/>
            <person name="Zhang Y."/>
            <person name="Lindpaintner K."/>
            <person name="Andrews T.D."/>
            <person name="Caccamo M."/>
            <person name="Clamp M."/>
            <person name="Clarke L."/>
            <person name="Curwen V."/>
            <person name="Durbin R.M."/>
            <person name="Eyras E."/>
            <person name="Searle S.M."/>
            <person name="Cooper G.M."/>
            <person name="Batzoglou S."/>
            <person name="Brudno M."/>
            <person name="Sidow A."/>
            <person name="Stone E.A."/>
            <person name="Payseur B.A."/>
            <person name="Bourque G."/>
            <person name="Lopez-Otin C."/>
            <person name="Puente X.S."/>
            <person name="Chakrabarti K."/>
            <person name="Chatterji S."/>
            <person name="Dewey C."/>
            <person name="Pachter L."/>
            <person name="Bray N."/>
            <person name="Yap V.B."/>
            <person name="Caspi A."/>
            <person name="Tesler G."/>
            <person name="Pevzner P.A."/>
            <person name="Haussler D."/>
            <person name="Roskin K.M."/>
            <person name="Baertsch R."/>
            <person name="Clawson H."/>
            <person name="Furey T.S."/>
            <person name="Hinrichs A.S."/>
            <person name="Karolchik D."/>
            <person name="Kent W.J."/>
            <person name="Rosenbloom K.R."/>
            <person name="Trumbower H."/>
            <person name="Weirauch M."/>
            <person name="Cooper D.N."/>
            <person name="Stenson P.D."/>
            <person name="Ma B."/>
            <person name="Brent M."/>
            <person name="Arumugam M."/>
            <person name="Shteynberg D."/>
            <person name="Copley R.R."/>
            <person name="Taylor M.S."/>
            <person name="Riethman H."/>
            <person name="Mudunuri U."/>
            <person name="Peterson J."/>
            <person name="Guyer M."/>
            <person name="Felsenfeld A."/>
            <person name="Old S."/>
            <person name="Mockrin S."/>
            <person name="Collins F.S."/>
        </authorList>
    </citation>
    <scope>NUCLEOTIDE SEQUENCE [LARGE SCALE GENOMIC DNA]</scope>
    <source>
        <strain>Brown Norway</strain>
    </source>
</reference>
<reference key="2">
    <citation type="journal article" date="2004" name="Genome Res.">
        <title>The status, quality, and expansion of the NIH full-length cDNA project: the Mammalian Gene Collection (MGC).</title>
        <authorList>
            <consortium name="The MGC Project Team"/>
        </authorList>
    </citation>
    <scope>NUCLEOTIDE SEQUENCE [LARGE SCALE MRNA] (ISOFORM 2)</scope>
</reference>
<reference key="3">
    <citation type="journal article" date="2012" name="Nat. Commun.">
        <title>Quantitative maps of protein phosphorylation sites across 14 different rat organs and tissues.</title>
        <authorList>
            <person name="Lundby A."/>
            <person name="Secher A."/>
            <person name="Lage K."/>
            <person name="Nordsborg N.B."/>
            <person name="Dmytriyev A."/>
            <person name="Lundby C."/>
            <person name="Olsen J.V."/>
        </authorList>
    </citation>
    <scope>PHOSPHORYLATION [LARGE SCALE ANALYSIS] AT SER-368</scope>
    <scope>IDENTIFICATION BY MASS SPECTROMETRY [LARGE SCALE ANALYSIS]</scope>
</reference>
<feature type="chain" id="PRO_0000080489" description="Cyclin-L2">
    <location>
        <begin position="1"/>
        <end position="520"/>
    </location>
</feature>
<feature type="region of interest" description="Cyclin-like 1">
    <location>
        <begin position="81"/>
        <end position="183"/>
    </location>
</feature>
<feature type="region of interest" description="Cyclin-like 2">
    <location>
        <begin position="196"/>
        <end position="280"/>
    </location>
</feature>
<feature type="region of interest" description="Disordered" evidence="4">
    <location>
        <begin position="309"/>
        <end position="520"/>
    </location>
</feature>
<feature type="region of interest" description="RS">
    <location>
        <begin position="384"/>
        <end position="422"/>
    </location>
</feature>
<feature type="compositionally biased region" description="Basic and acidic residues" evidence="4">
    <location>
        <begin position="356"/>
        <end position="366"/>
    </location>
</feature>
<feature type="compositionally biased region" description="Low complexity" evidence="4">
    <location>
        <begin position="407"/>
        <end position="429"/>
    </location>
</feature>
<feature type="compositionally biased region" description="Basic and acidic residues" evidence="4">
    <location>
        <begin position="440"/>
        <end position="453"/>
    </location>
</feature>
<feature type="compositionally biased region" description="Basic residues" evidence="4">
    <location>
        <begin position="454"/>
        <end position="471"/>
    </location>
</feature>
<feature type="compositionally biased region" description="Basic and acidic residues" evidence="4">
    <location>
        <begin position="472"/>
        <end position="481"/>
    </location>
</feature>
<feature type="compositionally biased region" description="Basic and acidic residues" evidence="4">
    <location>
        <begin position="489"/>
        <end position="514"/>
    </location>
</feature>
<feature type="modified residue" description="Phosphoserine" evidence="2">
    <location>
        <position position="330"/>
    </location>
</feature>
<feature type="modified residue" description="Phosphoserine" evidence="2">
    <location>
        <position position="337"/>
    </location>
</feature>
<feature type="modified residue" description="Phosphoserine" evidence="2">
    <location>
        <position position="347"/>
    </location>
</feature>
<feature type="modified residue" description="Phosphoserine" evidence="2">
    <location>
        <position position="350"/>
    </location>
</feature>
<feature type="modified residue" description="Phosphoserine" evidence="7">
    <location>
        <position position="368"/>
    </location>
</feature>
<feature type="splice variant" id="VSP_016136" description="In isoform 2." evidence="5">
    <original>NYMNDS</original>
    <variation>VASEGK</variation>
    <location>
        <begin position="219"/>
        <end position="224"/>
    </location>
</feature>
<feature type="splice variant" id="VSP_016137" description="In isoform 2." evidence="5">
    <location>
        <begin position="225"/>
        <end position="520"/>
    </location>
</feature>
<keyword id="KW-0025">Alternative splicing</keyword>
<keyword id="KW-0195">Cyclin</keyword>
<keyword id="KW-0539">Nucleus</keyword>
<keyword id="KW-0597">Phosphoprotein</keyword>
<keyword id="KW-1185">Reference proteome</keyword>
<keyword id="KW-0677">Repeat</keyword>
<keyword id="KW-0804">Transcription</keyword>
<keyword id="KW-0805">Transcription regulation</keyword>